<reference key="1">
    <citation type="journal article" date="2003" name="Proc. Natl. Acad. Sci. U.S.A.">
        <title>Complete genome sequence of the Q-fever pathogen, Coxiella burnetii.</title>
        <authorList>
            <person name="Seshadri R."/>
            <person name="Paulsen I.T."/>
            <person name="Eisen J.A."/>
            <person name="Read T.D."/>
            <person name="Nelson K.E."/>
            <person name="Nelson W.C."/>
            <person name="Ward N.L."/>
            <person name="Tettelin H."/>
            <person name="Davidsen T.M."/>
            <person name="Beanan M.J."/>
            <person name="DeBoy R.T."/>
            <person name="Daugherty S.C."/>
            <person name="Brinkac L.M."/>
            <person name="Madupu R."/>
            <person name="Dodson R.J."/>
            <person name="Khouri H.M."/>
            <person name="Lee K.H."/>
            <person name="Carty H.A."/>
            <person name="Scanlan D."/>
            <person name="Heinzen R.A."/>
            <person name="Thompson H.A."/>
            <person name="Samuel J.E."/>
            <person name="Fraser C.M."/>
            <person name="Heidelberg J.F."/>
        </authorList>
    </citation>
    <scope>NUCLEOTIDE SEQUENCE [LARGE SCALE GENOMIC DNA]</scope>
    <source>
        <strain>RSA 493 / Nine Mile phase I</strain>
    </source>
</reference>
<comment type="function">
    <text evidence="1">Catalyzes the reversible formation of acyl-phosphate (acyl-PO(4)) from acyl-[acyl-carrier-protein] (acyl-ACP). This enzyme utilizes acyl-ACP as fatty acyl donor, but not acyl-CoA.</text>
</comment>
<comment type="catalytic activity">
    <reaction evidence="1">
        <text>a fatty acyl-[ACP] + phosphate = an acyl phosphate + holo-[ACP]</text>
        <dbReference type="Rhea" id="RHEA:42292"/>
        <dbReference type="Rhea" id="RHEA-COMP:9685"/>
        <dbReference type="Rhea" id="RHEA-COMP:14125"/>
        <dbReference type="ChEBI" id="CHEBI:43474"/>
        <dbReference type="ChEBI" id="CHEBI:59918"/>
        <dbReference type="ChEBI" id="CHEBI:64479"/>
        <dbReference type="ChEBI" id="CHEBI:138651"/>
        <dbReference type="EC" id="2.3.1.274"/>
    </reaction>
</comment>
<comment type="pathway">
    <text evidence="1">Lipid metabolism; phospholipid metabolism.</text>
</comment>
<comment type="subunit">
    <text evidence="1">Homodimer. Probably interacts with PlsY.</text>
</comment>
<comment type="subcellular location">
    <subcellularLocation>
        <location evidence="1">Cytoplasm</location>
    </subcellularLocation>
    <text evidence="1">Associated with the membrane possibly through PlsY.</text>
</comment>
<comment type="similarity">
    <text evidence="1">Belongs to the PlsX family.</text>
</comment>
<feature type="chain" id="PRO_0000189872" description="Phosphate acyltransferase">
    <location>
        <begin position="1"/>
        <end position="343"/>
    </location>
</feature>
<sequence>MLKTIALDAMGGDNGPKVIVPAALSILKKHPKVKLILVGKEDQLALLIPEKNRKSFGQRLEIIHASEEVGMDEPPSQALRTKKNSSMRVAINLVKEGQAHACVSAGNTGALMATARYVLKTLPGIDRPAIIAAFPTKNEREVRVLDLGANVDSTPENLYQFAVMGSILSSAAHNIRNPRIGLLNVGEEEIKGNELVKKANELFETRKTINYIGYVEGNTIFNNIADVVVCDGFVGNAVLKASEGVAQLIKQHAKEAFSEAWWTKLALLPAIPILKRLIRRVDPERYNGATFLGLNGIVVKSHGSANIKAFVCAVEEAIFQVDKNIPQLIKEEVAHILKEFENK</sequence>
<keyword id="KW-0963">Cytoplasm</keyword>
<keyword id="KW-0444">Lipid biosynthesis</keyword>
<keyword id="KW-0443">Lipid metabolism</keyword>
<keyword id="KW-0594">Phospholipid biosynthesis</keyword>
<keyword id="KW-1208">Phospholipid metabolism</keyword>
<keyword id="KW-1185">Reference proteome</keyword>
<keyword id="KW-0808">Transferase</keyword>
<name>PLSX_COXBU</name>
<proteinExistence type="inferred from homology"/>
<accession>Q83E40</accession>
<dbReference type="EC" id="2.3.1.274" evidence="1"/>
<dbReference type="EMBL" id="AE016828">
    <property type="protein sequence ID" value="AAO90040.1"/>
    <property type="molecule type" value="Genomic_DNA"/>
</dbReference>
<dbReference type="RefSeq" id="NP_819526.1">
    <property type="nucleotide sequence ID" value="NC_002971.4"/>
</dbReference>
<dbReference type="RefSeq" id="WP_010957612.1">
    <property type="nucleotide sequence ID" value="NC_002971.4"/>
</dbReference>
<dbReference type="SMR" id="Q83E40"/>
<dbReference type="STRING" id="227377.CBU_0492"/>
<dbReference type="EnsemblBacteria" id="AAO90040">
    <property type="protein sequence ID" value="AAO90040"/>
    <property type="gene ID" value="CBU_0492"/>
</dbReference>
<dbReference type="GeneID" id="1208376"/>
<dbReference type="KEGG" id="cbu:CBU_0492"/>
<dbReference type="PATRIC" id="fig|227377.7.peg.483"/>
<dbReference type="eggNOG" id="COG0416">
    <property type="taxonomic scope" value="Bacteria"/>
</dbReference>
<dbReference type="HOGENOM" id="CLU_039379_1_0_6"/>
<dbReference type="OrthoDB" id="9806408at2"/>
<dbReference type="UniPathway" id="UPA00085"/>
<dbReference type="Proteomes" id="UP000002671">
    <property type="component" value="Chromosome"/>
</dbReference>
<dbReference type="GO" id="GO:0005737">
    <property type="term" value="C:cytoplasm"/>
    <property type="evidence" value="ECO:0007669"/>
    <property type="project" value="UniProtKB-SubCell"/>
</dbReference>
<dbReference type="GO" id="GO:0043811">
    <property type="term" value="F:phosphate:acyl-[acyl carrier protein] acyltransferase activity"/>
    <property type="evidence" value="ECO:0007669"/>
    <property type="project" value="UniProtKB-UniRule"/>
</dbReference>
<dbReference type="GO" id="GO:0006633">
    <property type="term" value="P:fatty acid biosynthetic process"/>
    <property type="evidence" value="ECO:0007669"/>
    <property type="project" value="UniProtKB-UniRule"/>
</dbReference>
<dbReference type="GO" id="GO:0008654">
    <property type="term" value="P:phospholipid biosynthetic process"/>
    <property type="evidence" value="ECO:0007669"/>
    <property type="project" value="UniProtKB-KW"/>
</dbReference>
<dbReference type="Gene3D" id="3.40.718.10">
    <property type="entry name" value="Isopropylmalate Dehydrogenase"/>
    <property type="match status" value="1"/>
</dbReference>
<dbReference type="HAMAP" id="MF_00019">
    <property type="entry name" value="PlsX"/>
    <property type="match status" value="1"/>
</dbReference>
<dbReference type="InterPro" id="IPR003664">
    <property type="entry name" value="FA_synthesis"/>
</dbReference>
<dbReference type="InterPro" id="IPR012281">
    <property type="entry name" value="Phospholipid_synth_PlsX-like"/>
</dbReference>
<dbReference type="NCBIfam" id="TIGR00182">
    <property type="entry name" value="plsX"/>
    <property type="match status" value="1"/>
</dbReference>
<dbReference type="PANTHER" id="PTHR30100">
    <property type="entry name" value="FATTY ACID/PHOSPHOLIPID SYNTHESIS PROTEIN PLSX"/>
    <property type="match status" value="1"/>
</dbReference>
<dbReference type="PANTHER" id="PTHR30100:SF1">
    <property type="entry name" value="PHOSPHATE ACYLTRANSFERASE"/>
    <property type="match status" value="1"/>
</dbReference>
<dbReference type="Pfam" id="PF02504">
    <property type="entry name" value="FA_synthesis"/>
    <property type="match status" value="1"/>
</dbReference>
<dbReference type="PIRSF" id="PIRSF002465">
    <property type="entry name" value="Phsphlp_syn_PlsX"/>
    <property type="match status" value="1"/>
</dbReference>
<dbReference type="SUPFAM" id="SSF53659">
    <property type="entry name" value="Isocitrate/Isopropylmalate dehydrogenase-like"/>
    <property type="match status" value="1"/>
</dbReference>
<organism>
    <name type="scientific">Coxiella burnetii (strain RSA 493 / Nine Mile phase I)</name>
    <dbReference type="NCBI Taxonomy" id="227377"/>
    <lineage>
        <taxon>Bacteria</taxon>
        <taxon>Pseudomonadati</taxon>
        <taxon>Pseudomonadota</taxon>
        <taxon>Gammaproteobacteria</taxon>
        <taxon>Legionellales</taxon>
        <taxon>Coxiellaceae</taxon>
        <taxon>Coxiella</taxon>
    </lineage>
</organism>
<evidence type="ECO:0000255" key="1">
    <source>
        <dbReference type="HAMAP-Rule" id="MF_00019"/>
    </source>
</evidence>
<protein>
    <recommendedName>
        <fullName evidence="1">Phosphate acyltransferase</fullName>
        <ecNumber evidence="1">2.3.1.274</ecNumber>
    </recommendedName>
    <alternativeName>
        <fullName evidence="1">Acyl-ACP phosphotransacylase</fullName>
    </alternativeName>
    <alternativeName>
        <fullName evidence="1">Acyl-[acyl-carrier-protein]--phosphate acyltransferase</fullName>
    </alternativeName>
    <alternativeName>
        <fullName evidence="1">Phosphate-acyl-ACP acyltransferase</fullName>
    </alternativeName>
</protein>
<gene>
    <name evidence="1" type="primary">plsX</name>
    <name type="ordered locus">CBU_0492</name>
</gene>